<organism>
    <name type="scientific">Pectobacterium atrosepticum (strain SCRI 1043 / ATCC BAA-672)</name>
    <name type="common">Erwinia carotovora subsp. atroseptica</name>
    <dbReference type="NCBI Taxonomy" id="218491"/>
    <lineage>
        <taxon>Bacteria</taxon>
        <taxon>Pseudomonadati</taxon>
        <taxon>Pseudomonadota</taxon>
        <taxon>Gammaproteobacteria</taxon>
        <taxon>Enterobacterales</taxon>
        <taxon>Pectobacteriaceae</taxon>
        <taxon>Pectobacterium</taxon>
    </lineage>
</organism>
<comment type="function">
    <text evidence="1">Catalyzes the formation of 6,7-dimethyl-8-ribityllumazine by condensation of 5-amino-6-(D-ribitylamino)uracil with 3,4-dihydroxy-2-butanone 4-phosphate. This is the penultimate step in the biosynthesis of riboflavin.</text>
</comment>
<comment type="catalytic activity">
    <reaction evidence="1">
        <text>(2S)-2-hydroxy-3-oxobutyl phosphate + 5-amino-6-(D-ribitylamino)uracil = 6,7-dimethyl-8-(1-D-ribityl)lumazine + phosphate + 2 H2O + H(+)</text>
        <dbReference type="Rhea" id="RHEA:26152"/>
        <dbReference type="ChEBI" id="CHEBI:15377"/>
        <dbReference type="ChEBI" id="CHEBI:15378"/>
        <dbReference type="ChEBI" id="CHEBI:15934"/>
        <dbReference type="ChEBI" id="CHEBI:43474"/>
        <dbReference type="ChEBI" id="CHEBI:58201"/>
        <dbReference type="ChEBI" id="CHEBI:58830"/>
        <dbReference type="EC" id="2.5.1.78"/>
    </reaction>
</comment>
<comment type="pathway">
    <text evidence="1">Cofactor biosynthesis; riboflavin biosynthesis; riboflavin from 2-hydroxy-3-oxobutyl phosphate and 5-amino-6-(D-ribitylamino)uracil: step 1/2.</text>
</comment>
<comment type="subunit">
    <text evidence="1">Forms an icosahedral capsid composed of 60 subunits, arranged as a dodecamer of pentamers.</text>
</comment>
<comment type="similarity">
    <text evidence="1">Belongs to the DMRL synthase family.</text>
</comment>
<reference key="1">
    <citation type="journal article" date="2004" name="Proc. Natl. Acad. Sci. U.S.A.">
        <title>Genome sequence of the enterobacterial phytopathogen Erwinia carotovora subsp. atroseptica and characterization of virulence factors.</title>
        <authorList>
            <person name="Bell K.S."/>
            <person name="Sebaihia M."/>
            <person name="Pritchard L."/>
            <person name="Holden M.T.G."/>
            <person name="Hyman L.J."/>
            <person name="Holeva M.C."/>
            <person name="Thomson N.R."/>
            <person name="Bentley S.D."/>
            <person name="Churcher L.J.C."/>
            <person name="Mungall K."/>
            <person name="Atkin R."/>
            <person name="Bason N."/>
            <person name="Brooks K."/>
            <person name="Chillingworth T."/>
            <person name="Clark K."/>
            <person name="Doggett J."/>
            <person name="Fraser A."/>
            <person name="Hance Z."/>
            <person name="Hauser H."/>
            <person name="Jagels K."/>
            <person name="Moule S."/>
            <person name="Norbertczak H."/>
            <person name="Ormond D."/>
            <person name="Price C."/>
            <person name="Quail M.A."/>
            <person name="Sanders M."/>
            <person name="Walker D."/>
            <person name="Whitehead S."/>
            <person name="Salmond G.P.C."/>
            <person name="Birch P.R.J."/>
            <person name="Parkhill J."/>
            <person name="Toth I.K."/>
        </authorList>
    </citation>
    <scope>NUCLEOTIDE SEQUENCE [LARGE SCALE GENOMIC DNA]</scope>
    <source>
        <strain>SCRI 1043 / ATCC BAA-672</strain>
    </source>
</reference>
<sequence length="158" mass="16450">MNVIEGVVATPDARVAIAIARFNHFINDSLLQGAIDALKRIGQVKDENITVVWVPGAYELPLAVRALTKSAKNGGYDAVIALGTVIRGGTAHFEFVAGECSSGLSSVAMDSEIPVAFGVLTTESIEQAIERAGTKAGNKGAEAALTALEMINVLKAIK</sequence>
<gene>
    <name evidence="1" type="primary">ribH</name>
    <name type="ordered locus">ECA1127</name>
</gene>
<evidence type="ECO:0000255" key="1">
    <source>
        <dbReference type="HAMAP-Rule" id="MF_00178"/>
    </source>
</evidence>
<name>RISB_PECAS</name>
<feature type="chain" id="PRO_1000040420" description="6,7-dimethyl-8-ribityllumazine synthase">
    <location>
        <begin position="1"/>
        <end position="158"/>
    </location>
</feature>
<feature type="active site" description="Proton donor" evidence="1">
    <location>
        <position position="92"/>
    </location>
</feature>
<feature type="binding site" evidence="1">
    <location>
        <position position="22"/>
    </location>
    <ligand>
        <name>5-amino-6-(D-ribitylamino)uracil</name>
        <dbReference type="ChEBI" id="CHEBI:15934"/>
    </ligand>
</feature>
<feature type="binding site" evidence="1">
    <location>
        <begin position="57"/>
        <end position="59"/>
    </location>
    <ligand>
        <name>5-amino-6-(D-ribitylamino)uracil</name>
        <dbReference type="ChEBI" id="CHEBI:15934"/>
    </ligand>
</feature>
<feature type="binding site" evidence="1">
    <location>
        <begin position="84"/>
        <end position="86"/>
    </location>
    <ligand>
        <name>5-amino-6-(D-ribitylamino)uracil</name>
        <dbReference type="ChEBI" id="CHEBI:15934"/>
    </ligand>
</feature>
<feature type="binding site" evidence="1">
    <location>
        <begin position="89"/>
        <end position="90"/>
    </location>
    <ligand>
        <name>(2S)-2-hydroxy-3-oxobutyl phosphate</name>
        <dbReference type="ChEBI" id="CHEBI:58830"/>
    </ligand>
</feature>
<feature type="binding site" evidence="1">
    <location>
        <position position="117"/>
    </location>
    <ligand>
        <name>5-amino-6-(D-ribitylamino)uracil</name>
        <dbReference type="ChEBI" id="CHEBI:15934"/>
    </ligand>
</feature>
<feature type="binding site" evidence="1">
    <location>
        <position position="131"/>
    </location>
    <ligand>
        <name>(2S)-2-hydroxy-3-oxobutyl phosphate</name>
        <dbReference type="ChEBI" id="CHEBI:58830"/>
    </ligand>
</feature>
<proteinExistence type="inferred from homology"/>
<keyword id="KW-1185">Reference proteome</keyword>
<keyword id="KW-0686">Riboflavin biosynthesis</keyword>
<keyword id="KW-0808">Transferase</keyword>
<dbReference type="EC" id="2.5.1.78" evidence="1"/>
<dbReference type="EMBL" id="BX950851">
    <property type="protein sequence ID" value="CAG74037.1"/>
    <property type="molecule type" value="Genomic_DNA"/>
</dbReference>
<dbReference type="SMR" id="Q6D848"/>
<dbReference type="STRING" id="218491.ECA1127"/>
<dbReference type="KEGG" id="eca:ECA1127"/>
<dbReference type="PATRIC" id="fig|218491.5.peg.1140"/>
<dbReference type="eggNOG" id="COG0054">
    <property type="taxonomic scope" value="Bacteria"/>
</dbReference>
<dbReference type="HOGENOM" id="CLU_089358_1_1_6"/>
<dbReference type="OrthoDB" id="9809709at2"/>
<dbReference type="UniPathway" id="UPA00275">
    <property type="reaction ID" value="UER00404"/>
</dbReference>
<dbReference type="Proteomes" id="UP000007966">
    <property type="component" value="Chromosome"/>
</dbReference>
<dbReference type="GO" id="GO:0005829">
    <property type="term" value="C:cytosol"/>
    <property type="evidence" value="ECO:0007669"/>
    <property type="project" value="TreeGrafter"/>
</dbReference>
<dbReference type="GO" id="GO:0009349">
    <property type="term" value="C:riboflavin synthase complex"/>
    <property type="evidence" value="ECO:0007669"/>
    <property type="project" value="InterPro"/>
</dbReference>
<dbReference type="GO" id="GO:0000906">
    <property type="term" value="F:6,7-dimethyl-8-ribityllumazine synthase activity"/>
    <property type="evidence" value="ECO:0007669"/>
    <property type="project" value="UniProtKB-UniRule"/>
</dbReference>
<dbReference type="GO" id="GO:0009231">
    <property type="term" value="P:riboflavin biosynthetic process"/>
    <property type="evidence" value="ECO:0007669"/>
    <property type="project" value="UniProtKB-UniRule"/>
</dbReference>
<dbReference type="CDD" id="cd09209">
    <property type="entry name" value="Lumazine_synthase-I"/>
    <property type="match status" value="1"/>
</dbReference>
<dbReference type="FunFam" id="3.40.50.960:FF:000001">
    <property type="entry name" value="6,7-dimethyl-8-ribityllumazine synthase"/>
    <property type="match status" value="1"/>
</dbReference>
<dbReference type="Gene3D" id="3.40.50.960">
    <property type="entry name" value="Lumazine/riboflavin synthase"/>
    <property type="match status" value="1"/>
</dbReference>
<dbReference type="HAMAP" id="MF_00178">
    <property type="entry name" value="Lumazine_synth"/>
    <property type="match status" value="1"/>
</dbReference>
<dbReference type="InterPro" id="IPR034964">
    <property type="entry name" value="LS"/>
</dbReference>
<dbReference type="InterPro" id="IPR002180">
    <property type="entry name" value="LS/RS"/>
</dbReference>
<dbReference type="InterPro" id="IPR036467">
    <property type="entry name" value="LS/RS_sf"/>
</dbReference>
<dbReference type="NCBIfam" id="TIGR00114">
    <property type="entry name" value="lumazine-synth"/>
    <property type="match status" value="1"/>
</dbReference>
<dbReference type="NCBIfam" id="NF000812">
    <property type="entry name" value="PRK00061.1-4"/>
    <property type="match status" value="1"/>
</dbReference>
<dbReference type="PANTHER" id="PTHR21058:SF0">
    <property type="entry name" value="6,7-DIMETHYL-8-RIBITYLLUMAZINE SYNTHASE"/>
    <property type="match status" value="1"/>
</dbReference>
<dbReference type="PANTHER" id="PTHR21058">
    <property type="entry name" value="6,7-DIMETHYL-8-RIBITYLLUMAZINE SYNTHASE DMRL SYNTHASE LUMAZINE SYNTHASE"/>
    <property type="match status" value="1"/>
</dbReference>
<dbReference type="Pfam" id="PF00885">
    <property type="entry name" value="DMRL_synthase"/>
    <property type="match status" value="1"/>
</dbReference>
<dbReference type="SUPFAM" id="SSF52121">
    <property type="entry name" value="Lumazine synthase"/>
    <property type="match status" value="1"/>
</dbReference>
<accession>Q6D848</accession>
<protein>
    <recommendedName>
        <fullName evidence="1">6,7-dimethyl-8-ribityllumazine synthase</fullName>
        <shortName evidence="1">DMRL synthase</shortName>
        <shortName evidence="1">LS</shortName>
        <shortName evidence="1">Lumazine synthase</shortName>
        <ecNumber evidence="1">2.5.1.78</ecNumber>
    </recommendedName>
</protein>